<name>Y040_CALS4</name>
<reference key="1">
    <citation type="journal article" date="2002" name="Genome Res.">
        <title>A complete sequence of the T. tengcongensis genome.</title>
        <authorList>
            <person name="Bao Q."/>
            <person name="Tian Y."/>
            <person name="Li W."/>
            <person name="Xu Z."/>
            <person name="Xuan Z."/>
            <person name="Hu S."/>
            <person name="Dong W."/>
            <person name="Yang J."/>
            <person name="Chen Y."/>
            <person name="Xue Y."/>
            <person name="Xu Y."/>
            <person name="Lai X."/>
            <person name="Huang L."/>
            <person name="Dong X."/>
            <person name="Ma Y."/>
            <person name="Ling L."/>
            <person name="Tan H."/>
            <person name="Chen R."/>
            <person name="Wang J."/>
            <person name="Yu J."/>
            <person name="Yang H."/>
        </authorList>
    </citation>
    <scope>NUCLEOTIDE SEQUENCE [LARGE SCALE GENOMIC DNA]</scope>
    <source>
        <strain>DSM 15242 / JCM 11007 / NBRC 100824 / MB4</strain>
    </source>
</reference>
<accession>Q8RDI5</accession>
<sequence>MAKGGFPGGFNINNMIKQAQQMQEEIKKMQEELMQKTVEGTSGGGMVKAVANGRKELVSININPEVVDKDDVETLEDLVLAAVNQALRNAEEMIASEMAKITGGFNIPGLF</sequence>
<gene>
    <name type="ordered locus">TTE0040</name>
</gene>
<proteinExistence type="inferred from homology"/>
<feature type="chain" id="PRO_0000170459" description="Nucleoid-associated protein TTE0040">
    <location>
        <begin position="1"/>
        <end position="111"/>
    </location>
</feature>
<organism>
    <name type="scientific">Caldanaerobacter subterraneus subsp. tengcongensis (strain DSM 15242 / JCM 11007 / NBRC 100824 / MB4)</name>
    <name type="common">Thermoanaerobacter tengcongensis</name>
    <dbReference type="NCBI Taxonomy" id="273068"/>
    <lineage>
        <taxon>Bacteria</taxon>
        <taxon>Bacillati</taxon>
        <taxon>Bacillota</taxon>
        <taxon>Clostridia</taxon>
        <taxon>Thermoanaerobacterales</taxon>
        <taxon>Thermoanaerobacteraceae</taxon>
        <taxon>Caldanaerobacter</taxon>
    </lineage>
</organism>
<keyword id="KW-0963">Cytoplasm</keyword>
<keyword id="KW-0238">DNA-binding</keyword>
<keyword id="KW-1185">Reference proteome</keyword>
<comment type="function">
    <text evidence="1">Binds to DNA and alters its conformation. May be involved in regulation of gene expression, nucleoid organization and DNA protection.</text>
</comment>
<comment type="subunit">
    <text evidence="1">Homodimer.</text>
</comment>
<comment type="subcellular location">
    <subcellularLocation>
        <location evidence="1">Cytoplasm</location>
        <location evidence="1">Nucleoid</location>
    </subcellularLocation>
</comment>
<comment type="similarity">
    <text evidence="1">Belongs to the YbaB/EbfC family.</text>
</comment>
<dbReference type="EMBL" id="AE008691">
    <property type="protein sequence ID" value="AAM23353.1"/>
    <property type="molecule type" value="Genomic_DNA"/>
</dbReference>
<dbReference type="RefSeq" id="WP_011024566.1">
    <property type="nucleotide sequence ID" value="NC_003869.1"/>
</dbReference>
<dbReference type="SMR" id="Q8RDI5"/>
<dbReference type="STRING" id="273068.TTE0040"/>
<dbReference type="KEGG" id="tte:TTE0040"/>
<dbReference type="eggNOG" id="COG0718">
    <property type="taxonomic scope" value="Bacteria"/>
</dbReference>
<dbReference type="HOGENOM" id="CLU_140930_1_0_9"/>
<dbReference type="OrthoDB" id="9795263at2"/>
<dbReference type="Proteomes" id="UP000000555">
    <property type="component" value="Chromosome"/>
</dbReference>
<dbReference type="GO" id="GO:0043590">
    <property type="term" value="C:bacterial nucleoid"/>
    <property type="evidence" value="ECO:0007669"/>
    <property type="project" value="UniProtKB-UniRule"/>
</dbReference>
<dbReference type="GO" id="GO:0005829">
    <property type="term" value="C:cytosol"/>
    <property type="evidence" value="ECO:0007669"/>
    <property type="project" value="TreeGrafter"/>
</dbReference>
<dbReference type="GO" id="GO:0003677">
    <property type="term" value="F:DNA binding"/>
    <property type="evidence" value="ECO:0007669"/>
    <property type="project" value="UniProtKB-UniRule"/>
</dbReference>
<dbReference type="Gene3D" id="3.30.1310.10">
    <property type="entry name" value="Nucleoid-associated protein YbaB-like domain"/>
    <property type="match status" value="1"/>
</dbReference>
<dbReference type="HAMAP" id="MF_00274">
    <property type="entry name" value="DNA_YbaB_EbfC"/>
    <property type="match status" value="1"/>
</dbReference>
<dbReference type="InterPro" id="IPR036894">
    <property type="entry name" value="YbaB-like_sf"/>
</dbReference>
<dbReference type="InterPro" id="IPR004401">
    <property type="entry name" value="YbaB/EbfC"/>
</dbReference>
<dbReference type="NCBIfam" id="TIGR00103">
    <property type="entry name" value="DNA_YbaB_EbfC"/>
    <property type="match status" value="1"/>
</dbReference>
<dbReference type="PANTHER" id="PTHR33449">
    <property type="entry name" value="NUCLEOID-ASSOCIATED PROTEIN YBAB"/>
    <property type="match status" value="1"/>
</dbReference>
<dbReference type="PANTHER" id="PTHR33449:SF1">
    <property type="entry name" value="NUCLEOID-ASSOCIATED PROTEIN YBAB"/>
    <property type="match status" value="1"/>
</dbReference>
<dbReference type="Pfam" id="PF02575">
    <property type="entry name" value="YbaB_DNA_bd"/>
    <property type="match status" value="1"/>
</dbReference>
<dbReference type="PIRSF" id="PIRSF004555">
    <property type="entry name" value="UCP004555"/>
    <property type="match status" value="1"/>
</dbReference>
<dbReference type="SUPFAM" id="SSF82607">
    <property type="entry name" value="YbaB-like"/>
    <property type="match status" value="1"/>
</dbReference>
<evidence type="ECO:0000255" key="1">
    <source>
        <dbReference type="HAMAP-Rule" id="MF_00274"/>
    </source>
</evidence>
<protein>
    <recommendedName>
        <fullName evidence="1">Nucleoid-associated protein TTE0040</fullName>
    </recommendedName>
</protein>